<reference key="1">
    <citation type="submission" date="2007-05" db="EMBL/GenBank/DDBJ databases">
        <title>Complete sequence of Thermosipho melanesiensis BI429.</title>
        <authorList>
            <consortium name="US DOE Joint Genome Institute"/>
            <person name="Copeland A."/>
            <person name="Lucas S."/>
            <person name="Lapidus A."/>
            <person name="Barry K."/>
            <person name="Glavina del Rio T."/>
            <person name="Dalin E."/>
            <person name="Tice H."/>
            <person name="Pitluck S."/>
            <person name="Chertkov O."/>
            <person name="Brettin T."/>
            <person name="Bruce D."/>
            <person name="Detter J.C."/>
            <person name="Han C."/>
            <person name="Schmutz J."/>
            <person name="Larimer F."/>
            <person name="Land M."/>
            <person name="Hauser L."/>
            <person name="Kyrpides N."/>
            <person name="Mikhailova N."/>
            <person name="Nelson K."/>
            <person name="Gogarten J.P."/>
            <person name="Noll K."/>
            <person name="Richardson P."/>
        </authorList>
    </citation>
    <scope>NUCLEOTIDE SEQUENCE [LARGE SCALE GENOMIC DNA]</scope>
    <source>
        <strain>DSM 12029 / CIP 104789 / BI429</strain>
    </source>
</reference>
<comment type="function">
    <text evidence="1">Catalyzes the oxidation of 5,10-methylenetetrahydrofolate to 5,10-methenyltetrahydrofolate and then the hydrolysis of 5,10-methenyltetrahydrofolate to 10-formyltetrahydrofolate.</text>
</comment>
<comment type="catalytic activity">
    <reaction evidence="1">
        <text>(6R)-5,10-methylene-5,6,7,8-tetrahydrofolate + NADP(+) = (6R)-5,10-methenyltetrahydrofolate + NADPH</text>
        <dbReference type="Rhea" id="RHEA:22812"/>
        <dbReference type="ChEBI" id="CHEBI:15636"/>
        <dbReference type="ChEBI" id="CHEBI:57455"/>
        <dbReference type="ChEBI" id="CHEBI:57783"/>
        <dbReference type="ChEBI" id="CHEBI:58349"/>
        <dbReference type="EC" id="1.5.1.5"/>
    </reaction>
</comment>
<comment type="catalytic activity">
    <reaction evidence="1">
        <text>(6R)-5,10-methenyltetrahydrofolate + H2O = (6R)-10-formyltetrahydrofolate + H(+)</text>
        <dbReference type="Rhea" id="RHEA:23700"/>
        <dbReference type="ChEBI" id="CHEBI:15377"/>
        <dbReference type="ChEBI" id="CHEBI:15378"/>
        <dbReference type="ChEBI" id="CHEBI:57455"/>
        <dbReference type="ChEBI" id="CHEBI:195366"/>
        <dbReference type="EC" id="3.5.4.9"/>
    </reaction>
</comment>
<comment type="pathway">
    <text evidence="1">One-carbon metabolism; tetrahydrofolate interconversion.</text>
</comment>
<comment type="subunit">
    <text evidence="1">Homodimer.</text>
</comment>
<comment type="similarity">
    <text evidence="1">Belongs to the tetrahydrofolate dehydrogenase/cyclohydrolase family.</text>
</comment>
<evidence type="ECO:0000255" key="1">
    <source>
        <dbReference type="HAMAP-Rule" id="MF_01576"/>
    </source>
</evidence>
<protein>
    <recommendedName>
        <fullName evidence="1">Bifunctional protein FolD</fullName>
    </recommendedName>
    <domain>
        <recommendedName>
            <fullName evidence="1">Methylenetetrahydrofolate dehydrogenase</fullName>
            <ecNumber evidence="1">1.5.1.5</ecNumber>
        </recommendedName>
    </domain>
    <domain>
        <recommendedName>
            <fullName evidence="1">Methenyltetrahydrofolate cyclohydrolase</fullName>
            <ecNumber evidence="1">3.5.4.9</ecNumber>
        </recommendedName>
    </domain>
</protein>
<proteinExistence type="inferred from homology"/>
<feature type="chain" id="PRO_0000318791" description="Bifunctional protein FolD">
    <location>
        <begin position="1"/>
        <end position="271"/>
    </location>
</feature>
<feature type="binding site" evidence="1">
    <location>
        <begin position="154"/>
        <end position="156"/>
    </location>
    <ligand>
        <name>NADP(+)</name>
        <dbReference type="ChEBI" id="CHEBI:58349"/>
    </ligand>
</feature>
<feature type="binding site" evidence="1">
    <location>
        <position position="181"/>
    </location>
    <ligand>
        <name>NADP(+)</name>
        <dbReference type="ChEBI" id="CHEBI:58349"/>
    </ligand>
</feature>
<feature type="binding site" evidence="1">
    <location>
        <position position="222"/>
    </location>
    <ligand>
        <name>NADP(+)</name>
        <dbReference type="ChEBI" id="CHEBI:58349"/>
    </ligand>
</feature>
<dbReference type="EC" id="1.5.1.5" evidence="1"/>
<dbReference type="EC" id="3.5.4.9" evidence="1"/>
<dbReference type="EMBL" id="CP000716">
    <property type="protein sequence ID" value="ABR31739.1"/>
    <property type="molecule type" value="Genomic_DNA"/>
</dbReference>
<dbReference type="RefSeq" id="WP_012058097.1">
    <property type="nucleotide sequence ID" value="NC_009616.1"/>
</dbReference>
<dbReference type="SMR" id="A6LP88"/>
<dbReference type="STRING" id="391009.Tmel_1907"/>
<dbReference type="KEGG" id="tme:Tmel_1907"/>
<dbReference type="eggNOG" id="COG0190">
    <property type="taxonomic scope" value="Bacteria"/>
</dbReference>
<dbReference type="HOGENOM" id="CLU_034045_3_0_0"/>
<dbReference type="OrthoDB" id="9803580at2"/>
<dbReference type="UniPathway" id="UPA00193"/>
<dbReference type="Proteomes" id="UP000001110">
    <property type="component" value="Chromosome"/>
</dbReference>
<dbReference type="GO" id="GO:0005829">
    <property type="term" value="C:cytosol"/>
    <property type="evidence" value="ECO:0007669"/>
    <property type="project" value="TreeGrafter"/>
</dbReference>
<dbReference type="GO" id="GO:0004477">
    <property type="term" value="F:methenyltetrahydrofolate cyclohydrolase activity"/>
    <property type="evidence" value="ECO:0007669"/>
    <property type="project" value="UniProtKB-UniRule"/>
</dbReference>
<dbReference type="GO" id="GO:0004488">
    <property type="term" value="F:methylenetetrahydrofolate dehydrogenase (NADP+) activity"/>
    <property type="evidence" value="ECO:0007669"/>
    <property type="project" value="UniProtKB-UniRule"/>
</dbReference>
<dbReference type="GO" id="GO:0000105">
    <property type="term" value="P:L-histidine biosynthetic process"/>
    <property type="evidence" value="ECO:0007669"/>
    <property type="project" value="UniProtKB-KW"/>
</dbReference>
<dbReference type="GO" id="GO:0009086">
    <property type="term" value="P:methionine biosynthetic process"/>
    <property type="evidence" value="ECO:0007669"/>
    <property type="project" value="UniProtKB-KW"/>
</dbReference>
<dbReference type="GO" id="GO:0006164">
    <property type="term" value="P:purine nucleotide biosynthetic process"/>
    <property type="evidence" value="ECO:0007669"/>
    <property type="project" value="UniProtKB-KW"/>
</dbReference>
<dbReference type="GO" id="GO:0035999">
    <property type="term" value="P:tetrahydrofolate interconversion"/>
    <property type="evidence" value="ECO:0007669"/>
    <property type="project" value="UniProtKB-UniRule"/>
</dbReference>
<dbReference type="CDD" id="cd01080">
    <property type="entry name" value="NAD_bind_m-THF_DH_Cyclohyd"/>
    <property type="match status" value="1"/>
</dbReference>
<dbReference type="Gene3D" id="3.40.50.10860">
    <property type="entry name" value="Leucine Dehydrogenase, chain A, domain 1"/>
    <property type="match status" value="1"/>
</dbReference>
<dbReference type="Gene3D" id="3.40.50.720">
    <property type="entry name" value="NAD(P)-binding Rossmann-like Domain"/>
    <property type="match status" value="1"/>
</dbReference>
<dbReference type="HAMAP" id="MF_01576">
    <property type="entry name" value="THF_DHG_CYH"/>
    <property type="match status" value="1"/>
</dbReference>
<dbReference type="InterPro" id="IPR046346">
    <property type="entry name" value="Aminoacid_DH-like_N_sf"/>
</dbReference>
<dbReference type="InterPro" id="IPR036291">
    <property type="entry name" value="NAD(P)-bd_dom_sf"/>
</dbReference>
<dbReference type="InterPro" id="IPR000672">
    <property type="entry name" value="THF_DH/CycHdrlase"/>
</dbReference>
<dbReference type="InterPro" id="IPR020630">
    <property type="entry name" value="THF_DH/CycHdrlase_cat_dom"/>
</dbReference>
<dbReference type="InterPro" id="IPR020631">
    <property type="entry name" value="THF_DH/CycHdrlase_NAD-bd_dom"/>
</dbReference>
<dbReference type="PANTHER" id="PTHR48099:SF5">
    <property type="entry name" value="C-1-TETRAHYDROFOLATE SYNTHASE, CYTOPLASMIC"/>
    <property type="match status" value="1"/>
</dbReference>
<dbReference type="PANTHER" id="PTHR48099">
    <property type="entry name" value="C-1-TETRAHYDROFOLATE SYNTHASE, CYTOPLASMIC-RELATED"/>
    <property type="match status" value="1"/>
</dbReference>
<dbReference type="Pfam" id="PF00763">
    <property type="entry name" value="THF_DHG_CYH"/>
    <property type="match status" value="1"/>
</dbReference>
<dbReference type="Pfam" id="PF02882">
    <property type="entry name" value="THF_DHG_CYH_C"/>
    <property type="match status" value="1"/>
</dbReference>
<dbReference type="PRINTS" id="PR00085">
    <property type="entry name" value="THFDHDRGNASE"/>
</dbReference>
<dbReference type="SUPFAM" id="SSF53223">
    <property type="entry name" value="Aminoacid dehydrogenase-like, N-terminal domain"/>
    <property type="match status" value="1"/>
</dbReference>
<dbReference type="SUPFAM" id="SSF51735">
    <property type="entry name" value="NAD(P)-binding Rossmann-fold domains"/>
    <property type="match status" value="1"/>
</dbReference>
<gene>
    <name evidence="1" type="primary">folD</name>
    <name type="ordered locus">Tmel_1907</name>
</gene>
<name>FOLD_THEM4</name>
<sequence length="271" mass="29642">MIIDVKPLYEDIKVNLLKRIEKLKRTPKLVAVTFKPDPSTVSYLKSQEKAAKRFGLDYEIFEGNSPKGVLKILAELSRDNNVNGIFVTHPLSQVNEMEIFENLVPSKDIEGRHPYNLGMLAYGEEFFAPCTAEAVVRIMENEIGIPGKNVVIVGRSNTVGKPLAIMLLRRDRSATVTVCHTKTRNLSSITKGADVVVAAAGRPGLITVDMVEKDSIIIDVGINVTDEGIIGDVSKDVANFAKVTPVPGGVGKITTILLMEHLVKSAEKMNF</sequence>
<accession>A6LP88</accession>
<keyword id="KW-0028">Amino-acid biosynthesis</keyword>
<keyword id="KW-0368">Histidine biosynthesis</keyword>
<keyword id="KW-0378">Hydrolase</keyword>
<keyword id="KW-0486">Methionine biosynthesis</keyword>
<keyword id="KW-0511">Multifunctional enzyme</keyword>
<keyword id="KW-0521">NADP</keyword>
<keyword id="KW-0554">One-carbon metabolism</keyword>
<keyword id="KW-0560">Oxidoreductase</keyword>
<keyword id="KW-0658">Purine biosynthesis</keyword>
<organism>
    <name type="scientific">Thermosipho melanesiensis (strain DSM 12029 / CIP 104789 / BI429)</name>
    <dbReference type="NCBI Taxonomy" id="391009"/>
    <lineage>
        <taxon>Bacteria</taxon>
        <taxon>Thermotogati</taxon>
        <taxon>Thermotogota</taxon>
        <taxon>Thermotogae</taxon>
        <taxon>Thermotogales</taxon>
        <taxon>Fervidobacteriaceae</taxon>
        <taxon>Thermosipho</taxon>
    </lineage>
</organism>